<proteinExistence type="inferred from homology"/>
<protein>
    <recommendedName>
        <fullName>Beta-lactamase BRO-1</fullName>
        <ecNumber>3.5.2.6</ecNumber>
    </recommendedName>
    <alternativeName>
        <fullName>Penicillinase</fullName>
    </alternativeName>
</protein>
<comment type="catalytic activity">
    <reaction>
        <text>a beta-lactam + H2O = a substituted beta-amino acid</text>
        <dbReference type="Rhea" id="RHEA:20401"/>
        <dbReference type="ChEBI" id="CHEBI:15377"/>
        <dbReference type="ChEBI" id="CHEBI:35627"/>
        <dbReference type="ChEBI" id="CHEBI:140347"/>
        <dbReference type="EC" id="3.5.2.6"/>
    </reaction>
</comment>
<comment type="subcellular location">
    <subcellularLocation>
        <location evidence="3">Cell membrane</location>
        <topology evidence="3">Lipid-anchor</topology>
    </subcellularLocation>
</comment>
<comment type="miscellaneous">
    <text evidence="4">The class A beta-lactamase family has a specific amino-acid numbering system, sometimes called Ambler or ABL numbering and often misspelt as Amber. A multiple sequence alignment was used to derive a consensus sequence and then the consensus was numbered taking into account insertions and deletions. This allows use of identical numbers, e.g. for active site residues, despite differences in protein length. UniProt always uses natural numbering of residues, hence there appear to be differences in numbering between this entry and some papers.</text>
</comment>
<comment type="similarity">
    <text evidence="3">Belongs to the class-A beta-lactamase family.</text>
</comment>
<sequence length="313" mass="35383">MQRRHFLQKTLLALPIIFSGNLLTGCKTNLSDDYLPDDKITNNPNLLQNKLKEILPIWENKFNAKIGMTIIADNGELSSHRGNEYFPVNSTIKAFIASHILLLVDKEKLDLNEKIIIKESDLIEYSPVCKKYFDENKPISISELCEATITLSDNGSANILLDKIGGLTAFNQFLKEIGADMVLANNEPLLNRSHYGETSDTAKPIPYTKSLKALIVGNILSNQSKEQLITWLINDKVADNLLRKYLPKNWRIGDKTGTGSESKNIIAVIWNENNKPYFISLFITQPHDGKSLDFKNQKDEIMAQIGKEIYPFL</sequence>
<reference key="1">
    <citation type="submission" date="1996-03" db="EMBL/GenBank/DDBJ databases">
        <title>The Moraxella (Branhamella) catarrhalis chromosomal beta-lactamase gene is flanked by an amidase gene and a conserved gene of unknown function.</title>
        <authorList>
            <person name="Beaulieu D."/>
            <person name="Piche L."/>
            <person name="Parr T.R. Jr."/>
            <person name="Roeger-Lawry K."/>
            <person name="Rosteck P."/>
            <person name="Roy P.H."/>
        </authorList>
    </citation>
    <scope>NUCLEOTIDE SEQUENCE [GENOMIC DNA]</scope>
    <source>
        <strain>ATCC 53879 / E22</strain>
    </source>
</reference>
<reference key="2">
    <citation type="journal article" date="1991" name="Biochem. J.">
        <title>A standard numbering scheme for the class A beta-lactamases.</title>
        <authorList>
            <person name="Ambler R.P."/>
            <person name="Coulson A.F."/>
            <person name="Frere J.M."/>
            <person name="Ghuysen J.M."/>
            <person name="Joris B."/>
            <person name="Forsman M."/>
            <person name="Levesque R.C."/>
            <person name="Tiraby G."/>
            <person name="Waley S.G."/>
        </authorList>
    </citation>
    <scope>AMINO ACID NUMBERING SCHEME</scope>
</reference>
<feature type="signal peptide" evidence="2">
    <location>
        <begin position="1"/>
        <end position="25"/>
    </location>
</feature>
<feature type="chain" id="PRO_0000017002" description="Beta-lactamase BRO-1">
    <location>
        <begin position="26"/>
        <end position="313"/>
    </location>
</feature>
<feature type="active site" description="Acyl-ester intermediate" evidence="1">
    <location>
        <position position="90"/>
    </location>
</feature>
<feature type="binding site" evidence="1">
    <location>
        <begin position="255"/>
        <end position="257"/>
    </location>
    <ligand>
        <name>substrate</name>
    </ligand>
</feature>
<feature type="lipid moiety-binding region" description="N-palmitoyl cysteine" evidence="2">
    <location>
        <position position="26"/>
    </location>
</feature>
<feature type="lipid moiety-binding region" description="S-diacylglycerol cysteine" evidence="2">
    <location>
        <position position="26"/>
    </location>
</feature>
<organism>
    <name type="scientific">Moraxella catarrhalis</name>
    <name type="common">Branhamella catarrhalis</name>
    <dbReference type="NCBI Taxonomy" id="480"/>
    <lineage>
        <taxon>Bacteria</taxon>
        <taxon>Pseudomonadati</taxon>
        <taxon>Pseudomonadota</taxon>
        <taxon>Gammaproteobacteria</taxon>
        <taxon>Moraxellales</taxon>
        <taxon>Moraxellaceae</taxon>
        <taxon>Moraxella</taxon>
    </lineage>
</organism>
<gene>
    <name type="primary">bla</name>
</gene>
<keyword id="KW-0046">Antibiotic resistance</keyword>
<keyword id="KW-1003">Cell membrane</keyword>
<keyword id="KW-0378">Hydrolase</keyword>
<keyword id="KW-0449">Lipoprotein</keyword>
<keyword id="KW-0472">Membrane</keyword>
<keyword id="KW-0564">Palmitate</keyword>
<keyword id="KW-0732">Signal</keyword>
<dbReference type="EC" id="3.5.2.6"/>
<dbReference type="EMBL" id="U49269">
    <property type="protein sequence ID" value="AAA92126.1"/>
    <property type="molecule type" value="Genomic_DNA"/>
</dbReference>
<dbReference type="RefSeq" id="WP_003657002.1">
    <property type="nucleotide sequence ID" value="NZ_WSZE01000004.1"/>
</dbReference>
<dbReference type="SMR" id="Q59514"/>
<dbReference type="BindingDB" id="Q59514"/>
<dbReference type="ChEMBL" id="CHEMBL1744491"/>
<dbReference type="CARD" id="ARO:3004761">
    <property type="molecule name" value="BRO-1"/>
    <property type="mechanism identifier" value="ARO:0001004"/>
    <property type="mechanism name" value="antibiotic inactivation"/>
</dbReference>
<dbReference type="eggNOG" id="COG2367">
    <property type="taxonomic scope" value="Bacteria"/>
</dbReference>
<dbReference type="OrthoDB" id="9784149at2"/>
<dbReference type="SABIO-RK" id="Q59514"/>
<dbReference type="GO" id="GO:0005886">
    <property type="term" value="C:plasma membrane"/>
    <property type="evidence" value="ECO:0007669"/>
    <property type="project" value="UniProtKB-SubCell"/>
</dbReference>
<dbReference type="GO" id="GO:0008800">
    <property type="term" value="F:beta-lactamase activity"/>
    <property type="evidence" value="ECO:0007669"/>
    <property type="project" value="UniProtKB-EC"/>
</dbReference>
<dbReference type="GO" id="GO:0030655">
    <property type="term" value="P:beta-lactam antibiotic catabolic process"/>
    <property type="evidence" value="ECO:0007669"/>
    <property type="project" value="InterPro"/>
</dbReference>
<dbReference type="GO" id="GO:0046677">
    <property type="term" value="P:response to antibiotic"/>
    <property type="evidence" value="ECO:0007669"/>
    <property type="project" value="UniProtKB-KW"/>
</dbReference>
<dbReference type="Gene3D" id="3.40.710.10">
    <property type="entry name" value="DD-peptidase/beta-lactamase superfamily"/>
    <property type="match status" value="1"/>
</dbReference>
<dbReference type="InterPro" id="IPR012338">
    <property type="entry name" value="Beta-lactam/transpept-like"/>
</dbReference>
<dbReference type="InterPro" id="IPR045155">
    <property type="entry name" value="Beta-lactam_cat"/>
</dbReference>
<dbReference type="InterPro" id="IPR000871">
    <property type="entry name" value="Beta-lactam_class-A"/>
</dbReference>
<dbReference type="NCBIfam" id="NF033103">
    <property type="entry name" value="bla_class_A"/>
    <property type="match status" value="1"/>
</dbReference>
<dbReference type="PANTHER" id="PTHR35333">
    <property type="entry name" value="BETA-LACTAMASE"/>
    <property type="match status" value="1"/>
</dbReference>
<dbReference type="PANTHER" id="PTHR35333:SF3">
    <property type="entry name" value="BETA-LACTAMASE-TYPE TRANSPEPTIDASE FOLD CONTAINING PROTEIN"/>
    <property type="match status" value="1"/>
</dbReference>
<dbReference type="Pfam" id="PF13354">
    <property type="entry name" value="Beta-lactamase2"/>
    <property type="match status" value="1"/>
</dbReference>
<dbReference type="PRINTS" id="PR00118">
    <property type="entry name" value="BLACTAMASEA"/>
</dbReference>
<dbReference type="SUPFAM" id="SSF56601">
    <property type="entry name" value="beta-lactamase/transpeptidase-like"/>
    <property type="match status" value="1"/>
</dbReference>
<dbReference type="PROSITE" id="PS51257">
    <property type="entry name" value="PROKAR_LIPOPROTEIN"/>
    <property type="match status" value="1"/>
</dbReference>
<evidence type="ECO:0000250" key="1"/>
<evidence type="ECO:0000255" key="2">
    <source>
        <dbReference type="PROSITE-ProRule" id="PRU00303"/>
    </source>
</evidence>
<evidence type="ECO:0000305" key="3"/>
<evidence type="ECO:0000305" key="4">
    <source>
    </source>
</evidence>
<accession>Q59514</accession>
<name>BLA1_MORCA</name>